<comment type="function">
    <text evidence="1">Major role in the synthesis of nucleoside triphosphates other than ATP. The ATP gamma phosphate is transferred to the NDP beta phosphate via a ping-pong mechanism, using a phosphorylated active-site intermediate.</text>
</comment>
<comment type="catalytic activity">
    <reaction evidence="1">
        <text>a 2'-deoxyribonucleoside 5'-diphosphate + ATP = a 2'-deoxyribonucleoside 5'-triphosphate + ADP</text>
        <dbReference type="Rhea" id="RHEA:44640"/>
        <dbReference type="ChEBI" id="CHEBI:30616"/>
        <dbReference type="ChEBI" id="CHEBI:61560"/>
        <dbReference type="ChEBI" id="CHEBI:73316"/>
        <dbReference type="ChEBI" id="CHEBI:456216"/>
        <dbReference type="EC" id="2.7.4.6"/>
    </reaction>
</comment>
<comment type="catalytic activity">
    <reaction evidence="1">
        <text>a ribonucleoside 5'-diphosphate + ATP = a ribonucleoside 5'-triphosphate + ADP</text>
        <dbReference type="Rhea" id="RHEA:18113"/>
        <dbReference type="ChEBI" id="CHEBI:30616"/>
        <dbReference type="ChEBI" id="CHEBI:57930"/>
        <dbReference type="ChEBI" id="CHEBI:61557"/>
        <dbReference type="ChEBI" id="CHEBI:456216"/>
        <dbReference type="EC" id="2.7.4.6"/>
    </reaction>
</comment>
<comment type="cofactor">
    <cofactor evidence="1">
        <name>Mg(2+)</name>
        <dbReference type="ChEBI" id="CHEBI:18420"/>
    </cofactor>
</comment>
<comment type="subunit">
    <text evidence="1">Homotetramer.</text>
</comment>
<comment type="subcellular location">
    <subcellularLocation>
        <location evidence="1">Cytoplasm</location>
    </subcellularLocation>
</comment>
<comment type="similarity">
    <text evidence="1">Belongs to the NDK family.</text>
</comment>
<feature type="chain" id="PRO_0000267803" description="Nucleoside diphosphate kinase">
    <location>
        <begin position="1"/>
        <end position="143"/>
    </location>
</feature>
<feature type="active site" description="Pros-phosphohistidine intermediate" evidence="1">
    <location>
        <position position="117"/>
    </location>
</feature>
<feature type="binding site" evidence="1">
    <location>
        <position position="11"/>
    </location>
    <ligand>
        <name>ATP</name>
        <dbReference type="ChEBI" id="CHEBI:30616"/>
    </ligand>
</feature>
<feature type="binding site" evidence="1">
    <location>
        <position position="59"/>
    </location>
    <ligand>
        <name>ATP</name>
        <dbReference type="ChEBI" id="CHEBI:30616"/>
    </ligand>
</feature>
<feature type="binding site" evidence="1">
    <location>
        <position position="87"/>
    </location>
    <ligand>
        <name>ATP</name>
        <dbReference type="ChEBI" id="CHEBI:30616"/>
    </ligand>
</feature>
<feature type="binding site" evidence="1">
    <location>
        <position position="93"/>
    </location>
    <ligand>
        <name>ATP</name>
        <dbReference type="ChEBI" id="CHEBI:30616"/>
    </ligand>
</feature>
<feature type="binding site" evidence="1">
    <location>
        <position position="104"/>
    </location>
    <ligand>
        <name>ATP</name>
        <dbReference type="ChEBI" id="CHEBI:30616"/>
    </ligand>
</feature>
<feature type="binding site" evidence="1">
    <location>
        <position position="114"/>
    </location>
    <ligand>
        <name>ATP</name>
        <dbReference type="ChEBI" id="CHEBI:30616"/>
    </ligand>
</feature>
<gene>
    <name evidence="1" type="primary">ndk</name>
    <name type="ordered locus">Shewmr7_1827</name>
</gene>
<dbReference type="EC" id="2.7.4.6" evidence="1"/>
<dbReference type="EMBL" id="CP000444">
    <property type="protein sequence ID" value="ABI42819.1"/>
    <property type="molecule type" value="Genomic_DNA"/>
</dbReference>
<dbReference type="SMR" id="Q0HVN6"/>
<dbReference type="KEGG" id="shm:Shewmr7_1827"/>
<dbReference type="HOGENOM" id="CLU_060216_8_1_6"/>
<dbReference type="GO" id="GO:0005737">
    <property type="term" value="C:cytoplasm"/>
    <property type="evidence" value="ECO:0007669"/>
    <property type="project" value="UniProtKB-SubCell"/>
</dbReference>
<dbReference type="GO" id="GO:0005524">
    <property type="term" value="F:ATP binding"/>
    <property type="evidence" value="ECO:0007669"/>
    <property type="project" value="UniProtKB-UniRule"/>
</dbReference>
<dbReference type="GO" id="GO:0046872">
    <property type="term" value="F:metal ion binding"/>
    <property type="evidence" value="ECO:0007669"/>
    <property type="project" value="UniProtKB-KW"/>
</dbReference>
<dbReference type="GO" id="GO:0004550">
    <property type="term" value="F:nucleoside diphosphate kinase activity"/>
    <property type="evidence" value="ECO:0007669"/>
    <property type="project" value="UniProtKB-UniRule"/>
</dbReference>
<dbReference type="GO" id="GO:0006241">
    <property type="term" value="P:CTP biosynthetic process"/>
    <property type="evidence" value="ECO:0007669"/>
    <property type="project" value="UniProtKB-UniRule"/>
</dbReference>
<dbReference type="GO" id="GO:0006183">
    <property type="term" value="P:GTP biosynthetic process"/>
    <property type="evidence" value="ECO:0007669"/>
    <property type="project" value="UniProtKB-UniRule"/>
</dbReference>
<dbReference type="GO" id="GO:0006228">
    <property type="term" value="P:UTP biosynthetic process"/>
    <property type="evidence" value="ECO:0007669"/>
    <property type="project" value="UniProtKB-UniRule"/>
</dbReference>
<dbReference type="CDD" id="cd04413">
    <property type="entry name" value="NDPk_I"/>
    <property type="match status" value="1"/>
</dbReference>
<dbReference type="FunFam" id="3.30.70.141:FF:000001">
    <property type="entry name" value="Nucleoside diphosphate kinase"/>
    <property type="match status" value="1"/>
</dbReference>
<dbReference type="Gene3D" id="3.30.70.141">
    <property type="entry name" value="Nucleoside diphosphate kinase-like domain"/>
    <property type="match status" value="1"/>
</dbReference>
<dbReference type="HAMAP" id="MF_00451">
    <property type="entry name" value="NDP_kinase"/>
    <property type="match status" value="1"/>
</dbReference>
<dbReference type="InterPro" id="IPR034907">
    <property type="entry name" value="NDK-like_dom"/>
</dbReference>
<dbReference type="InterPro" id="IPR036850">
    <property type="entry name" value="NDK-like_dom_sf"/>
</dbReference>
<dbReference type="InterPro" id="IPR001564">
    <property type="entry name" value="Nucleoside_diP_kinase"/>
</dbReference>
<dbReference type="InterPro" id="IPR023005">
    <property type="entry name" value="Nucleoside_diP_kinase_AS"/>
</dbReference>
<dbReference type="NCBIfam" id="NF001908">
    <property type="entry name" value="PRK00668.1"/>
    <property type="match status" value="1"/>
</dbReference>
<dbReference type="PANTHER" id="PTHR46161">
    <property type="entry name" value="NUCLEOSIDE DIPHOSPHATE KINASE"/>
    <property type="match status" value="1"/>
</dbReference>
<dbReference type="PANTHER" id="PTHR46161:SF3">
    <property type="entry name" value="NUCLEOSIDE DIPHOSPHATE KINASE DDB_G0292928-RELATED"/>
    <property type="match status" value="1"/>
</dbReference>
<dbReference type="Pfam" id="PF00334">
    <property type="entry name" value="NDK"/>
    <property type="match status" value="1"/>
</dbReference>
<dbReference type="PRINTS" id="PR01243">
    <property type="entry name" value="NUCDPKINASE"/>
</dbReference>
<dbReference type="SMART" id="SM00562">
    <property type="entry name" value="NDK"/>
    <property type="match status" value="1"/>
</dbReference>
<dbReference type="SUPFAM" id="SSF54919">
    <property type="entry name" value="Nucleoside diphosphate kinase, NDK"/>
    <property type="match status" value="1"/>
</dbReference>
<dbReference type="PROSITE" id="PS00469">
    <property type="entry name" value="NDPK"/>
    <property type="match status" value="1"/>
</dbReference>
<dbReference type="PROSITE" id="PS51374">
    <property type="entry name" value="NDPK_LIKE"/>
    <property type="match status" value="1"/>
</dbReference>
<organism>
    <name type="scientific">Shewanella sp. (strain MR-7)</name>
    <dbReference type="NCBI Taxonomy" id="60481"/>
    <lineage>
        <taxon>Bacteria</taxon>
        <taxon>Pseudomonadati</taxon>
        <taxon>Pseudomonadota</taxon>
        <taxon>Gammaproteobacteria</taxon>
        <taxon>Alteromonadales</taxon>
        <taxon>Shewanellaceae</taxon>
        <taxon>Shewanella</taxon>
    </lineage>
</organism>
<sequence length="143" mass="15483">MAIERTFSIIKPDAVAKNHIGAIYNRFETAGLKIVAAKMLHLTKEQAEGFYAEHSERGFFGALVAFMTSGPIMVQVLEGENAVLAHREILGATNPAQAAPGTIRADFAQSIDENAAHGSDSLESAAREIAYFFSAEELCPRTR</sequence>
<name>NDK_SHESR</name>
<keyword id="KW-0067">ATP-binding</keyword>
<keyword id="KW-0963">Cytoplasm</keyword>
<keyword id="KW-0418">Kinase</keyword>
<keyword id="KW-0460">Magnesium</keyword>
<keyword id="KW-0479">Metal-binding</keyword>
<keyword id="KW-0546">Nucleotide metabolism</keyword>
<keyword id="KW-0547">Nucleotide-binding</keyword>
<keyword id="KW-0597">Phosphoprotein</keyword>
<keyword id="KW-0808">Transferase</keyword>
<accession>Q0HVN6</accession>
<evidence type="ECO:0000255" key="1">
    <source>
        <dbReference type="HAMAP-Rule" id="MF_00451"/>
    </source>
</evidence>
<proteinExistence type="inferred from homology"/>
<protein>
    <recommendedName>
        <fullName evidence="1">Nucleoside diphosphate kinase</fullName>
        <shortName evidence="1">NDK</shortName>
        <shortName evidence="1">NDP kinase</shortName>
        <ecNumber evidence="1">2.7.4.6</ecNumber>
    </recommendedName>
    <alternativeName>
        <fullName evidence="1">Nucleoside-2-P kinase</fullName>
    </alternativeName>
</protein>
<reference key="1">
    <citation type="submission" date="2006-08" db="EMBL/GenBank/DDBJ databases">
        <title>Complete sequence of chromosome 1 of Shewanella sp. MR-7.</title>
        <authorList>
            <person name="Copeland A."/>
            <person name="Lucas S."/>
            <person name="Lapidus A."/>
            <person name="Barry K."/>
            <person name="Detter J.C."/>
            <person name="Glavina del Rio T."/>
            <person name="Hammon N."/>
            <person name="Israni S."/>
            <person name="Dalin E."/>
            <person name="Tice H."/>
            <person name="Pitluck S."/>
            <person name="Kiss H."/>
            <person name="Brettin T."/>
            <person name="Bruce D."/>
            <person name="Han C."/>
            <person name="Tapia R."/>
            <person name="Gilna P."/>
            <person name="Schmutz J."/>
            <person name="Larimer F."/>
            <person name="Land M."/>
            <person name="Hauser L."/>
            <person name="Kyrpides N."/>
            <person name="Mikhailova N."/>
            <person name="Nealson K."/>
            <person name="Konstantinidis K."/>
            <person name="Klappenbach J."/>
            <person name="Tiedje J."/>
            <person name="Richardson P."/>
        </authorList>
    </citation>
    <scope>NUCLEOTIDE SEQUENCE [LARGE SCALE GENOMIC DNA]</scope>
    <source>
        <strain>MR-7</strain>
    </source>
</reference>